<name>PRMA_SHISS</name>
<accession>Q3YWZ0</accession>
<feature type="chain" id="PRO_1000046097" description="Ribosomal protein L11 methyltransferase">
    <location>
        <begin position="1"/>
        <end position="293"/>
    </location>
</feature>
<feature type="binding site" evidence="1">
    <location>
        <position position="145"/>
    </location>
    <ligand>
        <name>S-adenosyl-L-methionine</name>
        <dbReference type="ChEBI" id="CHEBI:59789"/>
    </ligand>
</feature>
<feature type="binding site" evidence="1">
    <location>
        <position position="166"/>
    </location>
    <ligand>
        <name>S-adenosyl-L-methionine</name>
        <dbReference type="ChEBI" id="CHEBI:59789"/>
    </ligand>
</feature>
<feature type="binding site" evidence="1">
    <location>
        <position position="188"/>
    </location>
    <ligand>
        <name>S-adenosyl-L-methionine</name>
        <dbReference type="ChEBI" id="CHEBI:59789"/>
    </ligand>
</feature>
<feature type="binding site" evidence="1">
    <location>
        <position position="230"/>
    </location>
    <ligand>
        <name>S-adenosyl-L-methionine</name>
        <dbReference type="ChEBI" id="CHEBI:59789"/>
    </ligand>
</feature>
<dbReference type="EC" id="2.1.1.-" evidence="1"/>
<dbReference type="EMBL" id="CP000038">
    <property type="protein sequence ID" value="AAZ89972.1"/>
    <property type="molecule type" value="Genomic_DNA"/>
</dbReference>
<dbReference type="RefSeq" id="WP_001145818.1">
    <property type="nucleotide sequence ID" value="NC_007384.1"/>
</dbReference>
<dbReference type="SMR" id="Q3YWZ0"/>
<dbReference type="GeneID" id="93778728"/>
<dbReference type="KEGG" id="ssn:SSON_3400"/>
<dbReference type="HOGENOM" id="CLU_049382_4_1_6"/>
<dbReference type="Proteomes" id="UP000002529">
    <property type="component" value="Chromosome"/>
</dbReference>
<dbReference type="GO" id="GO:0005829">
    <property type="term" value="C:cytosol"/>
    <property type="evidence" value="ECO:0007669"/>
    <property type="project" value="TreeGrafter"/>
</dbReference>
<dbReference type="GO" id="GO:0016279">
    <property type="term" value="F:protein-lysine N-methyltransferase activity"/>
    <property type="evidence" value="ECO:0007669"/>
    <property type="project" value="TreeGrafter"/>
</dbReference>
<dbReference type="GO" id="GO:0032259">
    <property type="term" value="P:methylation"/>
    <property type="evidence" value="ECO:0007669"/>
    <property type="project" value="UniProtKB-KW"/>
</dbReference>
<dbReference type="CDD" id="cd02440">
    <property type="entry name" value="AdoMet_MTases"/>
    <property type="match status" value="1"/>
</dbReference>
<dbReference type="FunFam" id="3.40.50.150:FF:000021">
    <property type="entry name" value="Ribosomal protein L11 methyltransferase"/>
    <property type="match status" value="1"/>
</dbReference>
<dbReference type="Gene3D" id="3.40.50.150">
    <property type="entry name" value="Vaccinia Virus protein VP39"/>
    <property type="match status" value="1"/>
</dbReference>
<dbReference type="HAMAP" id="MF_00735">
    <property type="entry name" value="Methyltr_PrmA"/>
    <property type="match status" value="1"/>
</dbReference>
<dbReference type="InterPro" id="IPR050078">
    <property type="entry name" value="Ribosomal_L11_MeTrfase_PrmA"/>
</dbReference>
<dbReference type="InterPro" id="IPR004498">
    <property type="entry name" value="Ribosomal_PrmA_MeTrfase"/>
</dbReference>
<dbReference type="InterPro" id="IPR029063">
    <property type="entry name" value="SAM-dependent_MTases_sf"/>
</dbReference>
<dbReference type="NCBIfam" id="TIGR00406">
    <property type="entry name" value="prmA"/>
    <property type="match status" value="1"/>
</dbReference>
<dbReference type="PANTHER" id="PTHR43648">
    <property type="entry name" value="ELECTRON TRANSFER FLAVOPROTEIN BETA SUBUNIT LYSINE METHYLTRANSFERASE"/>
    <property type="match status" value="1"/>
</dbReference>
<dbReference type="PANTHER" id="PTHR43648:SF1">
    <property type="entry name" value="ELECTRON TRANSFER FLAVOPROTEIN BETA SUBUNIT LYSINE METHYLTRANSFERASE"/>
    <property type="match status" value="1"/>
</dbReference>
<dbReference type="Pfam" id="PF06325">
    <property type="entry name" value="PrmA"/>
    <property type="match status" value="1"/>
</dbReference>
<dbReference type="PIRSF" id="PIRSF000401">
    <property type="entry name" value="RPL11_MTase"/>
    <property type="match status" value="1"/>
</dbReference>
<dbReference type="SUPFAM" id="SSF53335">
    <property type="entry name" value="S-adenosyl-L-methionine-dependent methyltransferases"/>
    <property type="match status" value="1"/>
</dbReference>
<evidence type="ECO:0000255" key="1">
    <source>
        <dbReference type="HAMAP-Rule" id="MF_00735"/>
    </source>
</evidence>
<gene>
    <name evidence="1" type="primary">prmA</name>
    <name type="ordered locus">SSON_3400</name>
</gene>
<comment type="function">
    <text evidence="1">Methylates ribosomal protein L11.</text>
</comment>
<comment type="catalytic activity">
    <reaction evidence="1">
        <text>L-lysyl-[protein] + 3 S-adenosyl-L-methionine = N(6),N(6),N(6)-trimethyl-L-lysyl-[protein] + 3 S-adenosyl-L-homocysteine + 3 H(+)</text>
        <dbReference type="Rhea" id="RHEA:54192"/>
        <dbReference type="Rhea" id="RHEA-COMP:9752"/>
        <dbReference type="Rhea" id="RHEA-COMP:13826"/>
        <dbReference type="ChEBI" id="CHEBI:15378"/>
        <dbReference type="ChEBI" id="CHEBI:29969"/>
        <dbReference type="ChEBI" id="CHEBI:57856"/>
        <dbReference type="ChEBI" id="CHEBI:59789"/>
        <dbReference type="ChEBI" id="CHEBI:61961"/>
    </reaction>
</comment>
<comment type="subcellular location">
    <subcellularLocation>
        <location evidence="1">Cytoplasm</location>
    </subcellularLocation>
</comment>
<comment type="similarity">
    <text evidence="1">Belongs to the methyltransferase superfamily. PrmA family.</text>
</comment>
<organism>
    <name type="scientific">Shigella sonnei (strain Ss046)</name>
    <dbReference type="NCBI Taxonomy" id="300269"/>
    <lineage>
        <taxon>Bacteria</taxon>
        <taxon>Pseudomonadati</taxon>
        <taxon>Pseudomonadota</taxon>
        <taxon>Gammaproteobacteria</taxon>
        <taxon>Enterobacterales</taxon>
        <taxon>Enterobacteriaceae</taxon>
        <taxon>Shigella</taxon>
    </lineage>
</organism>
<proteinExistence type="inferred from homology"/>
<protein>
    <recommendedName>
        <fullName evidence="1">Ribosomal protein L11 methyltransferase</fullName>
        <shortName evidence="1">L11 Mtase</shortName>
        <ecNumber evidence="1">2.1.1.-</ecNumber>
    </recommendedName>
</protein>
<sequence>MPWIQLKLNTTGANAEDLSDALMEAGAVSITFQDTHDTPVFEPLPGETRLWGDTDVIGLFDAETDMNDVVAILENHPLLGAGFAHKIEQLEDKDWEREWMDNFHPMRFGERLWICPSWRDVPDENAVNVMLDPGLAFGTGTHPTTSLCLQWLDSLDLTGKIVIDFGCGSGILAIAALKLGAAKAIGIDIDPQAIQASRDNAERNGVSDRLELYLPKDQPEEMKADVVVANILAGPLRELAPLISVLPVSGGLLGLSGILASQAESVCEAYVDSFALDPVVEKEEWCRITGRKN</sequence>
<reference key="1">
    <citation type="journal article" date="2005" name="Nucleic Acids Res.">
        <title>Genome dynamics and diversity of Shigella species, the etiologic agents of bacillary dysentery.</title>
        <authorList>
            <person name="Yang F."/>
            <person name="Yang J."/>
            <person name="Zhang X."/>
            <person name="Chen L."/>
            <person name="Jiang Y."/>
            <person name="Yan Y."/>
            <person name="Tang X."/>
            <person name="Wang J."/>
            <person name="Xiong Z."/>
            <person name="Dong J."/>
            <person name="Xue Y."/>
            <person name="Zhu Y."/>
            <person name="Xu X."/>
            <person name="Sun L."/>
            <person name="Chen S."/>
            <person name="Nie H."/>
            <person name="Peng J."/>
            <person name="Xu J."/>
            <person name="Wang Y."/>
            <person name="Yuan Z."/>
            <person name="Wen Y."/>
            <person name="Yao Z."/>
            <person name="Shen Y."/>
            <person name="Qiang B."/>
            <person name="Hou Y."/>
            <person name="Yu J."/>
            <person name="Jin Q."/>
        </authorList>
    </citation>
    <scope>NUCLEOTIDE SEQUENCE [LARGE SCALE GENOMIC DNA]</scope>
    <source>
        <strain>Ss046</strain>
    </source>
</reference>
<keyword id="KW-0963">Cytoplasm</keyword>
<keyword id="KW-0489">Methyltransferase</keyword>
<keyword id="KW-1185">Reference proteome</keyword>
<keyword id="KW-0949">S-adenosyl-L-methionine</keyword>
<keyword id="KW-0808">Transferase</keyword>